<evidence type="ECO:0000255" key="1">
    <source>
        <dbReference type="PROSITE-ProRule" id="PRU00520"/>
    </source>
</evidence>
<evidence type="ECO:0000305" key="2"/>
<gene>
    <name type="primary">acyP</name>
    <name type="ordered locus">Msed_1692</name>
</gene>
<reference key="1">
    <citation type="journal article" date="2008" name="Appl. Environ. Microbiol.">
        <title>The genome sequence of the metal-mobilizing, extremely thermoacidophilic archaeon Metallosphaera sedula provides insights into bioleaching-associated metabolism.</title>
        <authorList>
            <person name="Auernik K.S."/>
            <person name="Maezato Y."/>
            <person name="Blum P.H."/>
            <person name="Kelly R.M."/>
        </authorList>
    </citation>
    <scope>NUCLEOTIDE SEQUENCE [LARGE SCALE GENOMIC DNA]</scope>
    <source>
        <strain>ATCC 51363 / DSM 5348 / JCM 9185 / NBRC 15509 / TH2</strain>
    </source>
</reference>
<sequence>MGLARLHAIVEGEVQGVGFRRYVQIHAVRLGLKGYAKNLPDGTVEVVAEGYEESIQQFLNYLWKGPPLALVTKVTHKLESYKGEFTSFDTY</sequence>
<name>ACYP_METS5</name>
<proteinExistence type="inferred from homology"/>
<dbReference type="EC" id="3.6.1.7"/>
<dbReference type="EMBL" id="CP000682">
    <property type="protein sequence ID" value="ABP95847.1"/>
    <property type="molecule type" value="Genomic_DNA"/>
</dbReference>
<dbReference type="RefSeq" id="WP_012021634.1">
    <property type="nucleotide sequence ID" value="NZ_CP139956.1"/>
</dbReference>
<dbReference type="SMR" id="A4YHE5"/>
<dbReference type="STRING" id="399549.Msed_1692"/>
<dbReference type="KEGG" id="mse:Msed_1692"/>
<dbReference type="eggNOG" id="arCOG01674">
    <property type="taxonomic scope" value="Archaea"/>
</dbReference>
<dbReference type="HOGENOM" id="CLU_141932_3_2_2"/>
<dbReference type="Proteomes" id="UP000000242">
    <property type="component" value="Chromosome"/>
</dbReference>
<dbReference type="GO" id="GO:0003998">
    <property type="term" value="F:acylphosphatase activity"/>
    <property type="evidence" value="ECO:0007669"/>
    <property type="project" value="UniProtKB-EC"/>
</dbReference>
<dbReference type="Gene3D" id="3.30.70.100">
    <property type="match status" value="1"/>
</dbReference>
<dbReference type="InterPro" id="IPR020456">
    <property type="entry name" value="Acylphosphatase"/>
</dbReference>
<dbReference type="InterPro" id="IPR001792">
    <property type="entry name" value="Acylphosphatase-like_dom"/>
</dbReference>
<dbReference type="InterPro" id="IPR036046">
    <property type="entry name" value="Acylphosphatase-like_dom_sf"/>
</dbReference>
<dbReference type="InterPro" id="IPR017968">
    <property type="entry name" value="Acylphosphatase_CS"/>
</dbReference>
<dbReference type="NCBIfam" id="NF011012">
    <property type="entry name" value="PRK14440.1"/>
    <property type="match status" value="1"/>
</dbReference>
<dbReference type="PANTHER" id="PTHR47268">
    <property type="entry name" value="ACYLPHOSPHATASE"/>
    <property type="match status" value="1"/>
</dbReference>
<dbReference type="PANTHER" id="PTHR47268:SF4">
    <property type="entry name" value="ACYLPHOSPHATASE"/>
    <property type="match status" value="1"/>
</dbReference>
<dbReference type="Pfam" id="PF00708">
    <property type="entry name" value="Acylphosphatase"/>
    <property type="match status" value="1"/>
</dbReference>
<dbReference type="SUPFAM" id="SSF54975">
    <property type="entry name" value="Acylphosphatase/BLUF domain-like"/>
    <property type="match status" value="1"/>
</dbReference>
<dbReference type="PROSITE" id="PS00150">
    <property type="entry name" value="ACYLPHOSPHATASE_1"/>
    <property type="match status" value="1"/>
</dbReference>
<dbReference type="PROSITE" id="PS00151">
    <property type="entry name" value="ACYLPHOSPHATASE_2"/>
    <property type="match status" value="1"/>
</dbReference>
<dbReference type="PROSITE" id="PS51160">
    <property type="entry name" value="ACYLPHOSPHATASE_3"/>
    <property type="match status" value="1"/>
</dbReference>
<protein>
    <recommendedName>
        <fullName>Acylphosphatase</fullName>
        <ecNumber>3.6.1.7</ecNumber>
    </recommendedName>
    <alternativeName>
        <fullName>Acylphosphate phosphohydrolase</fullName>
    </alternativeName>
</protein>
<accession>A4YHE5</accession>
<keyword id="KW-0378">Hydrolase</keyword>
<keyword id="KW-1185">Reference proteome</keyword>
<comment type="catalytic activity">
    <reaction>
        <text>an acyl phosphate + H2O = a carboxylate + phosphate + H(+)</text>
        <dbReference type="Rhea" id="RHEA:14965"/>
        <dbReference type="ChEBI" id="CHEBI:15377"/>
        <dbReference type="ChEBI" id="CHEBI:15378"/>
        <dbReference type="ChEBI" id="CHEBI:29067"/>
        <dbReference type="ChEBI" id="CHEBI:43474"/>
        <dbReference type="ChEBI" id="CHEBI:59918"/>
        <dbReference type="EC" id="3.6.1.7"/>
    </reaction>
</comment>
<comment type="similarity">
    <text evidence="2">Belongs to the acylphosphatase family.</text>
</comment>
<feature type="chain" id="PRO_0000326859" description="Acylphosphatase">
    <location>
        <begin position="1"/>
        <end position="91"/>
    </location>
</feature>
<feature type="domain" description="Acylphosphatase-like" evidence="1">
    <location>
        <begin position="5"/>
        <end position="91"/>
    </location>
</feature>
<feature type="active site" evidence="1">
    <location>
        <position position="20"/>
    </location>
</feature>
<feature type="active site" evidence="1">
    <location>
        <position position="38"/>
    </location>
</feature>
<organism>
    <name type="scientific">Metallosphaera sedula (strain ATCC 51363 / DSM 5348 / JCM 9185 / NBRC 15509 / TH2)</name>
    <dbReference type="NCBI Taxonomy" id="399549"/>
    <lineage>
        <taxon>Archaea</taxon>
        <taxon>Thermoproteota</taxon>
        <taxon>Thermoprotei</taxon>
        <taxon>Sulfolobales</taxon>
        <taxon>Sulfolobaceae</taxon>
        <taxon>Metallosphaera</taxon>
    </lineage>
</organism>